<feature type="transit peptide" description="Mitochondrion" evidence="2">
    <location>
        <begin position="1"/>
        <end status="unknown"/>
    </location>
</feature>
<feature type="chain" id="PRO_0000020355" description="Cytochrome c oxidase assembly protein COX18, mitochondrial">
    <location>
        <begin status="unknown"/>
        <end position="334"/>
    </location>
</feature>
<feature type="topological domain" description="Mitochondrial intermembrane" evidence="3">
    <location>
        <begin status="unknown"/>
        <end position="167"/>
    </location>
</feature>
<feature type="transmembrane region" description="Helical" evidence="2">
    <location>
        <begin position="168"/>
        <end position="188"/>
    </location>
</feature>
<feature type="topological domain" description="Mitochondrial matrix" evidence="3">
    <location>
        <begin position="189"/>
        <end position="224"/>
    </location>
</feature>
<feature type="transmembrane region" description="Helical" evidence="2">
    <location>
        <begin position="225"/>
        <end position="245"/>
    </location>
</feature>
<feature type="topological domain" description="Mitochondrial intermembrane" evidence="3">
    <location>
        <begin position="246"/>
        <end position="263"/>
    </location>
</feature>
<feature type="transmembrane region" description="Helical" evidence="2">
    <location>
        <begin position="264"/>
        <end position="284"/>
    </location>
</feature>
<feature type="topological domain" description="Mitochondrial matrix" evidence="3">
    <location>
        <begin position="285"/>
        <end position="334"/>
    </location>
</feature>
<keyword id="KW-0472">Membrane</keyword>
<keyword id="KW-0496">Mitochondrion</keyword>
<keyword id="KW-0999">Mitochondrion inner membrane</keyword>
<keyword id="KW-1185">Reference proteome</keyword>
<keyword id="KW-0809">Transit peptide</keyword>
<keyword id="KW-0812">Transmembrane</keyword>
<keyword id="KW-1133">Transmembrane helix</keyword>
<name>COX18_PONAB</name>
<proteinExistence type="evidence at transcript level"/>
<dbReference type="EMBL" id="CR860188">
    <property type="protein sequence ID" value="CAH92330.1"/>
    <property type="molecule type" value="mRNA"/>
</dbReference>
<dbReference type="RefSeq" id="NP_001126369.1">
    <property type="nucleotide sequence ID" value="NM_001132897.1"/>
</dbReference>
<dbReference type="FunCoup" id="Q5R7D0">
    <property type="interactions" value="514"/>
</dbReference>
<dbReference type="STRING" id="9601.ENSPPYP00000016549"/>
<dbReference type="GeneID" id="100173350"/>
<dbReference type="KEGG" id="pon:100173350"/>
<dbReference type="CTD" id="285521"/>
<dbReference type="eggNOG" id="KOG1239">
    <property type="taxonomic scope" value="Eukaryota"/>
</dbReference>
<dbReference type="InParanoid" id="Q5R7D0"/>
<dbReference type="OrthoDB" id="2148490at2759"/>
<dbReference type="Proteomes" id="UP000001595">
    <property type="component" value="Unplaced"/>
</dbReference>
<dbReference type="GO" id="GO:0005743">
    <property type="term" value="C:mitochondrial inner membrane"/>
    <property type="evidence" value="ECO:0000250"/>
    <property type="project" value="UniProtKB"/>
</dbReference>
<dbReference type="GO" id="GO:0032977">
    <property type="term" value="F:membrane insertase activity"/>
    <property type="evidence" value="ECO:0000250"/>
    <property type="project" value="UniProtKB"/>
</dbReference>
<dbReference type="GO" id="GO:0033617">
    <property type="term" value="P:mitochondrial cytochrome c oxidase assembly"/>
    <property type="evidence" value="ECO:0000250"/>
    <property type="project" value="UniProtKB"/>
</dbReference>
<dbReference type="GO" id="GO:0032979">
    <property type="term" value="P:protein insertion into mitochondrial inner membrane from matrix"/>
    <property type="evidence" value="ECO:0000250"/>
    <property type="project" value="UniProtKB"/>
</dbReference>
<dbReference type="GO" id="GO:0051204">
    <property type="term" value="P:protein insertion into mitochondrial membrane"/>
    <property type="evidence" value="ECO:0000250"/>
    <property type="project" value="UniProtKB"/>
</dbReference>
<dbReference type="GO" id="GO:0008535">
    <property type="term" value="P:respiratory chain complex IV assembly"/>
    <property type="evidence" value="ECO:0000250"/>
    <property type="project" value="UniProtKB"/>
</dbReference>
<dbReference type="CDD" id="cd20069">
    <property type="entry name" value="5TM_Oxa1-like"/>
    <property type="match status" value="1"/>
</dbReference>
<dbReference type="InterPro" id="IPR001708">
    <property type="entry name" value="YidC/ALB3/OXA1/COX18"/>
</dbReference>
<dbReference type="InterPro" id="IPR028055">
    <property type="entry name" value="YidC/Oxa/ALB_C"/>
</dbReference>
<dbReference type="PANTHER" id="PTHR12428:SF65">
    <property type="entry name" value="CYTOCHROME C OXIDASE ASSEMBLY PROTEIN COX18, MITOCHONDRIAL"/>
    <property type="match status" value="1"/>
</dbReference>
<dbReference type="PANTHER" id="PTHR12428">
    <property type="entry name" value="OXA1"/>
    <property type="match status" value="1"/>
</dbReference>
<dbReference type="Pfam" id="PF02096">
    <property type="entry name" value="60KD_IMP"/>
    <property type="match status" value="1"/>
</dbReference>
<reference key="1">
    <citation type="submission" date="2004-11" db="EMBL/GenBank/DDBJ databases">
        <authorList>
            <consortium name="The German cDNA consortium"/>
        </authorList>
    </citation>
    <scope>NUCLEOTIDE SEQUENCE [LARGE SCALE MRNA]</scope>
    <source>
        <tissue>Kidney</tissue>
    </source>
</reference>
<accession>Q5R7D0</accession>
<sequence length="334" mass="37103">MLCRLGGRWLRPLPALQLWARDPPLAPVPTSGAKRPTLPVWAVTPVSAVHANGWYEALAASSPVRVAEEVLLGVHAATGLPWWGSIPLSTAALRGAVTLPLAAYQHYILAKVENLQPEIKTIARHLNQEVAVRANQLGWSKRDARLTYLKNMRRLISELYVRDNCHPFKATVLVWIQLPMWIFMSFALRNLSTGAAHSEAGFSVEEQLAAGGILWFSDLTAPDPTWILPVSLGVINLLIVEICVLQKIGMSRFQTYITYFVRAMSVLMIPIAATVPSSIVLYWLCSSFVGLSQNLLLRSPGFRQLCRIPSTKSDSETPYKDIFAAFNTKFISRK</sequence>
<gene>
    <name type="primary">COX18</name>
    <name type="synonym">OXA1L2</name>
</gene>
<comment type="function">
    <text evidence="1">Mitochondrial membrane insertase required for the translocation of the C-terminus of cytochrome c oxidase subunit II (MT-CO2/COX2) across the mitochondrial inner membrane. Plays a role in MT-CO2/COX2 maturation following the COX20-mediated stabilization of newly synthesized MT-CO2/COX2 protein and before the action of the metallochaperones SCO1/2. Essential for the assembly and stability of the mitochondrial respiratory chain complex IV (also known as cytochrome c oxidase).</text>
</comment>
<comment type="subunit">
    <text evidence="1">Found in a complex with TMEM177, COA6, MT-CO2/COX2, COX20, SCO1 and SCO2. Interacts transiently with MT-CO2/COX2 during its maturation. Interacts with COX20 in a MT-CO2/COX2-dependent manner.</text>
</comment>
<comment type="subcellular location">
    <subcellularLocation>
        <location evidence="1">Mitochondrion inner membrane</location>
        <topology evidence="2">Multi-pass membrane protein</topology>
    </subcellularLocation>
</comment>
<comment type="similarity">
    <text evidence="3">Belongs to the OXA1/ALB3/YidC family.</text>
</comment>
<organism>
    <name type="scientific">Pongo abelii</name>
    <name type="common">Sumatran orangutan</name>
    <name type="synonym">Pongo pygmaeus abelii</name>
    <dbReference type="NCBI Taxonomy" id="9601"/>
    <lineage>
        <taxon>Eukaryota</taxon>
        <taxon>Metazoa</taxon>
        <taxon>Chordata</taxon>
        <taxon>Craniata</taxon>
        <taxon>Vertebrata</taxon>
        <taxon>Euteleostomi</taxon>
        <taxon>Mammalia</taxon>
        <taxon>Eutheria</taxon>
        <taxon>Euarchontoglires</taxon>
        <taxon>Primates</taxon>
        <taxon>Haplorrhini</taxon>
        <taxon>Catarrhini</taxon>
        <taxon>Hominidae</taxon>
        <taxon>Pongo</taxon>
    </lineage>
</organism>
<protein>
    <recommendedName>
        <fullName>Cytochrome c oxidase assembly protein COX18, mitochondrial</fullName>
    </recommendedName>
</protein>
<evidence type="ECO:0000250" key="1">
    <source>
        <dbReference type="UniProtKB" id="Q8N8Q8"/>
    </source>
</evidence>
<evidence type="ECO:0000255" key="2"/>
<evidence type="ECO:0000305" key="3"/>